<comment type="subcellular location">
    <subcellularLocation>
        <location evidence="4">Cytoplasm</location>
        <location evidence="4">Cytoskeleton</location>
    </subcellularLocation>
</comment>
<comment type="similarity">
    <text evidence="2">Belongs to the TRAFAC class myosin-kinesin ATPase superfamily. Kinesin family. NCD subfamily.</text>
</comment>
<comment type="sequence caution" evidence="4">
    <conflict type="erroneous gene model prediction">
        <sequence resource="EMBL-CDS" id="EAA58724"/>
    </conflict>
</comment>
<dbReference type="EMBL" id="X64603">
    <property type="protein sequence ID" value="CAA45887.1"/>
    <property type="molecule type" value="mRNA"/>
</dbReference>
<dbReference type="EMBL" id="AACD01000107">
    <property type="protein sequence ID" value="EAA58724.1"/>
    <property type="status" value="ALT_SEQ"/>
    <property type="molecule type" value="Genomic_DNA"/>
</dbReference>
<dbReference type="EMBL" id="BN001301">
    <property type="protein sequence ID" value="CBF69667.1"/>
    <property type="molecule type" value="Genomic_DNA"/>
</dbReference>
<dbReference type="PIR" id="A44337">
    <property type="entry name" value="A44337"/>
</dbReference>
<dbReference type="RefSeq" id="XP_663944.1">
    <property type="nucleotide sequence ID" value="XM_658852.1"/>
</dbReference>
<dbReference type="SMR" id="P28739"/>
<dbReference type="FunCoup" id="P28739">
    <property type="interactions" value="311"/>
</dbReference>
<dbReference type="STRING" id="227321.P28739"/>
<dbReference type="EnsemblFungi" id="CBF69667">
    <property type="protein sequence ID" value="CBF69667"/>
    <property type="gene ID" value="ANIA_06340"/>
</dbReference>
<dbReference type="KEGG" id="ani:ANIA_06340"/>
<dbReference type="VEuPathDB" id="FungiDB:AN6340"/>
<dbReference type="eggNOG" id="KOG0239">
    <property type="taxonomic scope" value="Eukaryota"/>
</dbReference>
<dbReference type="HOGENOM" id="CLU_001485_12_1_1"/>
<dbReference type="InParanoid" id="P28739"/>
<dbReference type="OMA" id="RHDMQKC"/>
<dbReference type="OrthoDB" id="3176171at2759"/>
<dbReference type="Proteomes" id="UP000000560">
    <property type="component" value="Chromosome I"/>
</dbReference>
<dbReference type="GO" id="GO:0000235">
    <property type="term" value="C:astral microtubule"/>
    <property type="evidence" value="ECO:0007669"/>
    <property type="project" value="EnsemblFungi"/>
</dbReference>
<dbReference type="GO" id="GO:0055028">
    <property type="term" value="C:cortical microtubule"/>
    <property type="evidence" value="ECO:0007669"/>
    <property type="project" value="EnsemblFungi"/>
</dbReference>
<dbReference type="GO" id="GO:0005737">
    <property type="term" value="C:cytoplasm"/>
    <property type="evidence" value="ECO:0000318"/>
    <property type="project" value="GO_Central"/>
</dbReference>
<dbReference type="GO" id="GO:0005871">
    <property type="term" value="C:kinesin complex"/>
    <property type="evidence" value="ECO:0000318"/>
    <property type="project" value="GO_Central"/>
</dbReference>
<dbReference type="GO" id="GO:0000776">
    <property type="term" value="C:kinetochore"/>
    <property type="evidence" value="ECO:0007669"/>
    <property type="project" value="EnsemblFungi"/>
</dbReference>
<dbReference type="GO" id="GO:0090619">
    <property type="term" value="C:meiotic spindle pole"/>
    <property type="evidence" value="ECO:0007669"/>
    <property type="project" value="EnsemblFungi"/>
</dbReference>
<dbReference type="GO" id="GO:0005874">
    <property type="term" value="C:microtubule"/>
    <property type="evidence" value="ECO:0000318"/>
    <property type="project" value="GO_Central"/>
</dbReference>
<dbReference type="GO" id="GO:0036449">
    <property type="term" value="C:microtubule minus-end"/>
    <property type="evidence" value="ECO:0007669"/>
    <property type="project" value="EnsemblFungi"/>
</dbReference>
<dbReference type="GO" id="GO:0005815">
    <property type="term" value="C:microtubule organizing center"/>
    <property type="evidence" value="ECO:0000318"/>
    <property type="project" value="GO_Central"/>
</dbReference>
<dbReference type="GO" id="GO:0035371">
    <property type="term" value="C:microtubule plus-end"/>
    <property type="evidence" value="ECO:0007669"/>
    <property type="project" value="EnsemblFungi"/>
</dbReference>
<dbReference type="GO" id="GO:0005872">
    <property type="term" value="C:minus-end kinesin complex"/>
    <property type="evidence" value="ECO:0007669"/>
    <property type="project" value="EnsemblFungi"/>
</dbReference>
<dbReference type="GO" id="GO:0072686">
    <property type="term" value="C:mitotic spindle"/>
    <property type="evidence" value="ECO:0000318"/>
    <property type="project" value="GO_Central"/>
</dbReference>
<dbReference type="GO" id="GO:1990537">
    <property type="term" value="C:mitotic spindle polar microtubule"/>
    <property type="evidence" value="ECO:0007669"/>
    <property type="project" value="EnsemblFungi"/>
</dbReference>
<dbReference type="GO" id="GO:0005634">
    <property type="term" value="C:nucleus"/>
    <property type="evidence" value="ECO:0000318"/>
    <property type="project" value="GO_Central"/>
</dbReference>
<dbReference type="GO" id="GO:0005524">
    <property type="term" value="F:ATP binding"/>
    <property type="evidence" value="ECO:0007669"/>
    <property type="project" value="UniProtKB-KW"/>
</dbReference>
<dbReference type="GO" id="GO:0016887">
    <property type="term" value="F:ATP hydrolysis activity"/>
    <property type="evidence" value="ECO:0000318"/>
    <property type="project" value="GO_Central"/>
</dbReference>
<dbReference type="GO" id="GO:0008017">
    <property type="term" value="F:microtubule binding"/>
    <property type="evidence" value="ECO:0000318"/>
    <property type="project" value="GO_Central"/>
</dbReference>
<dbReference type="GO" id="GO:0003777">
    <property type="term" value="F:microtubule motor activity"/>
    <property type="evidence" value="ECO:0000318"/>
    <property type="project" value="GO_Central"/>
</dbReference>
<dbReference type="GO" id="GO:0008569">
    <property type="term" value="F:minus-end-directed microtubule motor activity"/>
    <property type="evidence" value="ECO:0000314"/>
    <property type="project" value="AspGD"/>
</dbReference>
<dbReference type="GO" id="GO:0031122">
    <property type="term" value="P:cytoplasmic microtubule organization"/>
    <property type="evidence" value="ECO:0007669"/>
    <property type="project" value="EnsemblFungi"/>
</dbReference>
<dbReference type="GO" id="GO:0030951">
    <property type="term" value="P:establishment or maintenance of microtubule cytoskeleton polarity"/>
    <property type="evidence" value="ECO:0007669"/>
    <property type="project" value="EnsemblFungi"/>
</dbReference>
<dbReference type="GO" id="GO:0000742">
    <property type="term" value="P:karyogamy involved in conjugation with cellular fusion"/>
    <property type="evidence" value="ECO:0007669"/>
    <property type="project" value="EnsemblFungi"/>
</dbReference>
<dbReference type="GO" id="GO:1990571">
    <property type="term" value="P:meiotic centromere clustering"/>
    <property type="evidence" value="ECO:0007669"/>
    <property type="project" value="EnsemblFungi"/>
</dbReference>
<dbReference type="GO" id="GO:0140642">
    <property type="term" value="P:meiotic spindle formation (spindle phase two)"/>
    <property type="evidence" value="ECO:0007669"/>
    <property type="project" value="EnsemblFungi"/>
</dbReference>
<dbReference type="GO" id="GO:1990810">
    <property type="term" value="P:microtubule anchoring at mitotic spindle pole body"/>
    <property type="evidence" value="ECO:0007669"/>
    <property type="project" value="EnsemblFungi"/>
</dbReference>
<dbReference type="GO" id="GO:0001578">
    <property type="term" value="P:microtubule bundle formation"/>
    <property type="evidence" value="ECO:0007669"/>
    <property type="project" value="EnsemblFungi"/>
</dbReference>
<dbReference type="GO" id="GO:0007018">
    <property type="term" value="P:microtubule-based movement"/>
    <property type="evidence" value="ECO:0000318"/>
    <property type="project" value="GO_Central"/>
</dbReference>
<dbReference type="GO" id="GO:0031534">
    <property type="term" value="P:minus-end directed microtubule sliding"/>
    <property type="evidence" value="ECO:0007669"/>
    <property type="project" value="EnsemblFungi"/>
</dbReference>
<dbReference type="GO" id="GO:1990942">
    <property type="term" value="P:mitotic metaphase chromosome recapture"/>
    <property type="evidence" value="ECO:0007669"/>
    <property type="project" value="EnsemblFungi"/>
</dbReference>
<dbReference type="GO" id="GO:0090307">
    <property type="term" value="P:mitotic spindle assembly"/>
    <property type="evidence" value="ECO:0000315"/>
    <property type="project" value="AspGD"/>
</dbReference>
<dbReference type="GO" id="GO:0140641">
    <property type="term" value="P:mitotic spindle formation (spindle phase two)"/>
    <property type="evidence" value="ECO:0007669"/>
    <property type="project" value="EnsemblFungi"/>
</dbReference>
<dbReference type="GO" id="GO:0051256">
    <property type="term" value="P:mitotic spindle midzone assembly"/>
    <property type="evidence" value="ECO:0007669"/>
    <property type="project" value="EnsemblFungi"/>
</dbReference>
<dbReference type="GO" id="GO:0090561">
    <property type="term" value="P:nuclear migration during mitotic telophase"/>
    <property type="evidence" value="ECO:0007669"/>
    <property type="project" value="EnsemblFungi"/>
</dbReference>
<dbReference type="GO" id="GO:0000743">
    <property type="term" value="P:nuclear migration involved in conjugation with cellular fusion"/>
    <property type="evidence" value="ECO:0007669"/>
    <property type="project" value="EnsemblFungi"/>
</dbReference>
<dbReference type="GO" id="GO:0031535">
    <property type="term" value="P:plus-end directed microtubule sliding"/>
    <property type="evidence" value="ECO:0007669"/>
    <property type="project" value="EnsemblFungi"/>
</dbReference>
<dbReference type="CDD" id="cd01366">
    <property type="entry name" value="KISc_C_terminal"/>
    <property type="match status" value="1"/>
</dbReference>
<dbReference type="FunFam" id="3.40.850.10:FF:000065">
    <property type="entry name" value="Kinesin-like protein"/>
    <property type="match status" value="1"/>
</dbReference>
<dbReference type="Gene3D" id="3.40.850.10">
    <property type="entry name" value="Kinesin motor domain"/>
    <property type="match status" value="1"/>
</dbReference>
<dbReference type="InterPro" id="IPR027640">
    <property type="entry name" value="Kinesin-like_fam"/>
</dbReference>
<dbReference type="InterPro" id="IPR019821">
    <property type="entry name" value="Kinesin_motor_CS"/>
</dbReference>
<dbReference type="InterPro" id="IPR001752">
    <property type="entry name" value="Kinesin_motor_dom"/>
</dbReference>
<dbReference type="InterPro" id="IPR036961">
    <property type="entry name" value="Kinesin_motor_dom_sf"/>
</dbReference>
<dbReference type="InterPro" id="IPR027417">
    <property type="entry name" value="P-loop_NTPase"/>
</dbReference>
<dbReference type="PANTHER" id="PTHR47972">
    <property type="entry name" value="KINESIN-LIKE PROTEIN KLP-3"/>
    <property type="match status" value="1"/>
</dbReference>
<dbReference type="PANTHER" id="PTHR47972:SF45">
    <property type="entry name" value="PROTEIN CLARET SEGREGATIONAL"/>
    <property type="match status" value="1"/>
</dbReference>
<dbReference type="Pfam" id="PF00225">
    <property type="entry name" value="Kinesin"/>
    <property type="match status" value="1"/>
</dbReference>
<dbReference type="PRINTS" id="PR00380">
    <property type="entry name" value="KINESINHEAVY"/>
</dbReference>
<dbReference type="SMART" id="SM00129">
    <property type="entry name" value="KISc"/>
    <property type="match status" value="1"/>
</dbReference>
<dbReference type="SUPFAM" id="SSF52540">
    <property type="entry name" value="P-loop containing nucleoside triphosphate hydrolases"/>
    <property type="match status" value="1"/>
</dbReference>
<dbReference type="PROSITE" id="PS00411">
    <property type="entry name" value="KINESIN_MOTOR_1"/>
    <property type="match status" value="1"/>
</dbReference>
<dbReference type="PROSITE" id="PS50067">
    <property type="entry name" value="KINESIN_MOTOR_2"/>
    <property type="match status" value="1"/>
</dbReference>
<keyword id="KW-0067">ATP-binding</keyword>
<keyword id="KW-0175">Coiled coil</keyword>
<keyword id="KW-0963">Cytoplasm</keyword>
<keyword id="KW-0206">Cytoskeleton</keyword>
<keyword id="KW-0493">Microtubule</keyword>
<keyword id="KW-0505">Motor protein</keyword>
<keyword id="KW-0547">Nucleotide-binding</keyword>
<keyword id="KW-1185">Reference proteome</keyword>
<sequence length="770" mass="85801">MENVQSRMQGSRIPGLKEMNPSGTNARSRLPQPGAIANKPTAVPQLARTRSTTESTRIGAGPPSAARSVNGATKAHTRANSYANSSTLTRSASAASRPRGPLSSSTSGRPKTSMSTSRRPNGHALPRPATSLDTHQEERSYGGLGKRGEWDQDEREQNLESLFETFVSRISQQGQESSGLKDALEVYKSRVGELEEAKSEQTEQNIRLKVELDVSKSRLAEAEDALKNAQRDHEIAIDELMSRQRAECESVRYESQKSLDALKAQHESELKELRRQFERELEDEKCARVRELNQLHSKTALDAQLSQIELDKTIKELAATREDLQSLRTELDRERKNTNNLRQNLDTAASNSVTLESTISALKARIEFLESGREEQSEAFERLNQQMMDAMAETNAAKEKLRREETLRRKLHNQVQELKGNIRVFCRVRPTLENEGASDAAQFTYPDEGEDSKEINIIGPEEKSSFGTVTRKNHNFSFDHVFGPSAQNSDVFDEISQLVQSALDGYNVCIFCYGQTGSGKTHTMSSLDGMIPRAVHQIYETATSLEEKGWRYTMEGNFVEVYNENLNDLLGKAEELDKKKLEIRHDMQRGKTTITDATTVQLESPEMVESLLKRAAANRSVAATKANERSSRSHSIFILKLIGENYITGERSEGTLNLVDLAGSERLSHSGATGDRLKETQNINRSLSCLGDVIAALGQGKKDGHIPYRNSKLTYLLQFSLGGNSKTLMFVMVSPLQAHLSETLTSLKFATKVHNTHIGTAKKQTRVRDV</sequence>
<feature type="chain" id="PRO_0000125384" description="Kinesin-like protein klpA">
    <location>
        <begin position="1"/>
        <end position="770"/>
    </location>
</feature>
<feature type="domain" description="Kinesin motor" evidence="2">
    <location>
        <begin position="421"/>
        <end position="756"/>
    </location>
</feature>
<feature type="region of interest" description="Disordered" evidence="3">
    <location>
        <begin position="1"/>
        <end position="152"/>
    </location>
</feature>
<feature type="coiled-coil region" evidence="1">
    <location>
        <begin position="175"/>
        <end position="425"/>
    </location>
</feature>
<feature type="compositionally biased region" description="Low complexity" evidence="3">
    <location>
        <begin position="85"/>
        <end position="105"/>
    </location>
</feature>
<feature type="compositionally biased region" description="Polar residues" evidence="3">
    <location>
        <begin position="106"/>
        <end position="119"/>
    </location>
</feature>
<feature type="compositionally biased region" description="Basic and acidic residues" evidence="3">
    <location>
        <begin position="134"/>
        <end position="152"/>
    </location>
</feature>
<feature type="binding site" evidence="2">
    <location>
        <begin position="514"/>
        <end position="521"/>
    </location>
    <ligand>
        <name>ATP</name>
        <dbReference type="ChEBI" id="CHEBI:30616"/>
    </ligand>
</feature>
<gene>
    <name type="primary">klpA</name>
    <name type="ORF">AN6340</name>
</gene>
<accession>P28739</accession>
<accession>C8V100</accession>
<accession>Q5AZE0</accession>
<evidence type="ECO:0000255" key="1"/>
<evidence type="ECO:0000255" key="2">
    <source>
        <dbReference type="PROSITE-ProRule" id="PRU00283"/>
    </source>
</evidence>
<evidence type="ECO:0000256" key="3">
    <source>
        <dbReference type="SAM" id="MobiDB-lite"/>
    </source>
</evidence>
<evidence type="ECO:0000305" key="4"/>
<organism>
    <name type="scientific">Emericella nidulans (strain FGSC A4 / ATCC 38163 / CBS 112.46 / NRRL 194 / M139)</name>
    <name type="common">Aspergillus nidulans</name>
    <dbReference type="NCBI Taxonomy" id="227321"/>
    <lineage>
        <taxon>Eukaryota</taxon>
        <taxon>Fungi</taxon>
        <taxon>Dikarya</taxon>
        <taxon>Ascomycota</taxon>
        <taxon>Pezizomycotina</taxon>
        <taxon>Eurotiomycetes</taxon>
        <taxon>Eurotiomycetidae</taxon>
        <taxon>Eurotiales</taxon>
        <taxon>Aspergillaceae</taxon>
        <taxon>Aspergillus</taxon>
        <taxon>Aspergillus subgen. Nidulantes</taxon>
    </lineage>
</organism>
<name>KLPA_EMENI</name>
<reference key="1">
    <citation type="journal article" date="1993" name="J. Cell Biol.">
        <title>Suppression of the bimC4 mitotic spindle defect by deletion of klpA, a gene encoding a KAR3-related kinesin-like protein in Aspergillus nidulans.</title>
        <authorList>
            <person name="O'Connell M.J."/>
            <person name="Meluh P.B."/>
            <person name="Rose M.D."/>
            <person name="Morris N.R."/>
        </authorList>
    </citation>
    <scope>NUCLEOTIDE SEQUENCE [MRNA]</scope>
    <source>
        <strain>GB20</strain>
    </source>
</reference>
<reference key="2">
    <citation type="journal article" date="2005" name="Nature">
        <title>Sequencing of Aspergillus nidulans and comparative analysis with A. fumigatus and A. oryzae.</title>
        <authorList>
            <person name="Galagan J.E."/>
            <person name="Calvo S.E."/>
            <person name="Cuomo C."/>
            <person name="Ma L.-J."/>
            <person name="Wortman J.R."/>
            <person name="Batzoglou S."/>
            <person name="Lee S.-I."/>
            <person name="Bastuerkmen M."/>
            <person name="Spevak C.C."/>
            <person name="Clutterbuck J."/>
            <person name="Kapitonov V."/>
            <person name="Jurka J."/>
            <person name="Scazzocchio C."/>
            <person name="Farman M.L."/>
            <person name="Butler J."/>
            <person name="Purcell S."/>
            <person name="Harris S."/>
            <person name="Braus G.H."/>
            <person name="Draht O."/>
            <person name="Busch S."/>
            <person name="D'Enfert C."/>
            <person name="Bouchier C."/>
            <person name="Goldman G.H."/>
            <person name="Bell-Pedersen D."/>
            <person name="Griffiths-Jones S."/>
            <person name="Doonan J.H."/>
            <person name="Yu J."/>
            <person name="Vienken K."/>
            <person name="Pain A."/>
            <person name="Freitag M."/>
            <person name="Selker E.U."/>
            <person name="Archer D.B."/>
            <person name="Penalva M.A."/>
            <person name="Oakley B.R."/>
            <person name="Momany M."/>
            <person name="Tanaka T."/>
            <person name="Kumagai T."/>
            <person name="Asai K."/>
            <person name="Machida M."/>
            <person name="Nierman W.C."/>
            <person name="Denning D.W."/>
            <person name="Caddick M.X."/>
            <person name="Hynes M."/>
            <person name="Paoletti M."/>
            <person name="Fischer R."/>
            <person name="Miller B.L."/>
            <person name="Dyer P.S."/>
            <person name="Sachs M.S."/>
            <person name="Osmani S.A."/>
            <person name="Birren B.W."/>
        </authorList>
    </citation>
    <scope>NUCLEOTIDE SEQUENCE [LARGE SCALE GENOMIC DNA]</scope>
    <source>
        <strain>FGSC A4 / ATCC 38163 / CBS 112.46 / NRRL 194 / M139</strain>
    </source>
</reference>
<reference key="3">
    <citation type="journal article" date="2009" name="Fungal Genet. Biol.">
        <title>The 2008 update of the Aspergillus nidulans genome annotation: a community effort.</title>
        <authorList>
            <person name="Wortman J.R."/>
            <person name="Gilsenan J.M."/>
            <person name="Joardar V."/>
            <person name="Deegan J."/>
            <person name="Clutterbuck J."/>
            <person name="Andersen M.R."/>
            <person name="Archer D."/>
            <person name="Bencina M."/>
            <person name="Braus G."/>
            <person name="Coutinho P."/>
            <person name="von Dohren H."/>
            <person name="Doonan J."/>
            <person name="Driessen A.J."/>
            <person name="Durek P."/>
            <person name="Espeso E."/>
            <person name="Fekete E."/>
            <person name="Flipphi M."/>
            <person name="Estrada C.G."/>
            <person name="Geysens S."/>
            <person name="Goldman G."/>
            <person name="de Groot P.W."/>
            <person name="Hansen K."/>
            <person name="Harris S.D."/>
            <person name="Heinekamp T."/>
            <person name="Helmstaedt K."/>
            <person name="Henrissat B."/>
            <person name="Hofmann G."/>
            <person name="Homan T."/>
            <person name="Horio T."/>
            <person name="Horiuchi H."/>
            <person name="James S."/>
            <person name="Jones M."/>
            <person name="Karaffa L."/>
            <person name="Karanyi Z."/>
            <person name="Kato M."/>
            <person name="Keller N."/>
            <person name="Kelly D.E."/>
            <person name="Kiel J.A."/>
            <person name="Kim J.M."/>
            <person name="van der Klei I.J."/>
            <person name="Klis F.M."/>
            <person name="Kovalchuk A."/>
            <person name="Krasevec N."/>
            <person name="Kubicek C.P."/>
            <person name="Liu B."/>
            <person name="Maccabe A."/>
            <person name="Meyer V."/>
            <person name="Mirabito P."/>
            <person name="Miskei M."/>
            <person name="Mos M."/>
            <person name="Mullins J."/>
            <person name="Nelson D.R."/>
            <person name="Nielsen J."/>
            <person name="Oakley B.R."/>
            <person name="Osmani S.A."/>
            <person name="Pakula T."/>
            <person name="Paszewski A."/>
            <person name="Paulsen I."/>
            <person name="Pilsyk S."/>
            <person name="Pocsi I."/>
            <person name="Punt P.J."/>
            <person name="Ram A.F."/>
            <person name="Ren Q."/>
            <person name="Robellet X."/>
            <person name="Robson G."/>
            <person name="Seiboth B."/>
            <person name="van Solingen P."/>
            <person name="Specht T."/>
            <person name="Sun J."/>
            <person name="Taheri-Talesh N."/>
            <person name="Takeshita N."/>
            <person name="Ussery D."/>
            <person name="vanKuyk P.A."/>
            <person name="Visser H."/>
            <person name="van de Vondervoort P.J."/>
            <person name="de Vries R.P."/>
            <person name="Walton J."/>
            <person name="Xiang X."/>
            <person name="Xiong Y."/>
            <person name="Zeng A.P."/>
            <person name="Brandt B.W."/>
            <person name="Cornell M.J."/>
            <person name="van den Hondel C.A."/>
            <person name="Visser J."/>
            <person name="Oliver S.G."/>
            <person name="Turner G."/>
        </authorList>
    </citation>
    <scope>GENOME REANNOTATION</scope>
    <source>
        <strain>FGSC A4 / ATCC 38163 / CBS 112.46 / NRRL 194 / M139</strain>
    </source>
</reference>
<protein>
    <recommendedName>
        <fullName>Kinesin-like protein klpA</fullName>
    </recommendedName>
</protein>
<proteinExistence type="evidence at transcript level"/>